<dbReference type="EMBL" id="AJ002275">
    <property type="protein sequence ID" value="CAA05288.1"/>
    <property type="molecule type" value="Genomic_DNA"/>
</dbReference>
<dbReference type="EMBL" id="AF233324">
    <property type="protein sequence ID" value="AAF33468.1"/>
    <property type="molecule type" value="Genomic_DNA"/>
</dbReference>
<dbReference type="EMBL" id="AE006468">
    <property type="protein sequence ID" value="AAL22768.1"/>
    <property type="molecule type" value="Genomic_DNA"/>
</dbReference>
<dbReference type="RefSeq" id="NP_462809.1">
    <property type="nucleotide sequence ID" value="NC_003197.2"/>
</dbReference>
<dbReference type="RefSeq" id="WP_000193413.1">
    <property type="nucleotide sequence ID" value="NC_003197.2"/>
</dbReference>
<dbReference type="SMR" id="O33789"/>
<dbReference type="STRING" id="99287.STM3919"/>
<dbReference type="PaxDb" id="99287-STM3919"/>
<dbReference type="GeneID" id="1255445"/>
<dbReference type="KEGG" id="stm:STM3919"/>
<dbReference type="PATRIC" id="fig|99287.12.peg.4140"/>
<dbReference type="HOGENOM" id="CLU_060925_2_1_6"/>
<dbReference type="OMA" id="GLCCTLW"/>
<dbReference type="PhylomeDB" id="O33789"/>
<dbReference type="BioCyc" id="SENT99287:STM3919-MONOMER"/>
<dbReference type="UniPathway" id="UPA00566"/>
<dbReference type="Proteomes" id="UP000001014">
    <property type="component" value="Chromosome"/>
</dbReference>
<dbReference type="GO" id="GO:0005886">
    <property type="term" value="C:plasma membrane"/>
    <property type="evidence" value="ECO:0000318"/>
    <property type="project" value="GO_Central"/>
</dbReference>
<dbReference type="GO" id="GO:0004713">
    <property type="term" value="F:protein tyrosine kinase activity"/>
    <property type="evidence" value="ECO:0000318"/>
    <property type="project" value="GO_Central"/>
</dbReference>
<dbReference type="GO" id="GO:0009246">
    <property type="term" value="P:enterobacterial common antigen biosynthetic process"/>
    <property type="evidence" value="ECO:0007669"/>
    <property type="project" value="UniProtKB-UniRule"/>
</dbReference>
<dbReference type="Gene3D" id="3.30.1890.10">
    <property type="entry name" value="FepE-like"/>
    <property type="match status" value="1"/>
</dbReference>
<dbReference type="HAMAP" id="MF_02025">
    <property type="entry name" value="WzzE"/>
    <property type="match status" value="1"/>
</dbReference>
<dbReference type="InterPro" id="IPR050445">
    <property type="entry name" value="Bact_polysacc_biosynth/exp"/>
</dbReference>
<dbReference type="InterPro" id="IPR003856">
    <property type="entry name" value="LPS_length_determ_N_term"/>
</dbReference>
<dbReference type="InterPro" id="IPR032895">
    <property type="entry name" value="WzzE"/>
</dbReference>
<dbReference type="NCBIfam" id="NF008645">
    <property type="entry name" value="PRK11638.1"/>
    <property type="match status" value="1"/>
</dbReference>
<dbReference type="PANTHER" id="PTHR32309:SF16">
    <property type="entry name" value="ECA POLYSACCHARIDE CHAIN LENGTH MODULATION PROTEIN"/>
    <property type="match status" value="1"/>
</dbReference>
<dbReference type="PANTHER" id="PTHR32309">
    <property type="entry name" value="TYROSINE-PROTEIN KINASE"/>
    <property type="match status" value="1"/>
</dbReference>
<dbReference type="Pfam" id="PF02706">
    <property type="entry name" value="Wzz"/>
    <property type="match status" value="1"/>
</dbReference>
<dbReference type="SUPFAM" id="SSF160355">
    <property type="entry name" value="Bacterial polysaccharide co-polymerase-like"/>
    <property type="match status" value="1"/>
</dbReference>
<sequence>MTQPLPGARAVSAENELDIRGLFRTLWAGKFWIIGIGLLFALIALAYTFFARQEWSATAITDRPTVNMLGGYYSQQQFLRNLDIKTDPASSDKPSVMDEAYKEFIMQLASWDTRRDFWLQTDYYKQRMVGNSKADAAMLDELINNIQFTPGDFTRAINDNVKLIAETAPDANNLLRQYVAFASQRAASHLNDELKGAWAARTVQMKAQVKRQEEVAKAIYSRRVNSIEQALKIAEQHNISRSATDVPADELPDSELFLLGRPMLQARLENLQAVGPAFDLDYFQNRAMLNTLNVGPTLDPRFQTYRYLRTPEEPVKRDSPRRAFLMIMWGIVGALIGAGVALTRRRTI</sequence>
<name>WZZE_SALTY</name>
<comment type="function">
    <text evidence="1">Modulates the polysaccharide chain length of enterobacterial common antigen (ECA).</text>
</comment>
<comment type="pathway">
    <text evidence="1">Bacterial outer membrane biogenesis; enterobacterial common antigen biosynthesis.</text>
</comment>
<comment type="subunit">
    <text evidence="1">Probably part of a complex composed of WzxE, WzyE and WzzE.</text>
</comment>
<comment type="subcellular location">
    <subcellularLocation>
        <location evidence="1">Cell inner membrane</location>
        <topology evidence="1">Multi-pass membrane protein</topology>
    </subcellularLocation>
</comment>
<comment type="similarity">
    <text evidence="1">Belongs to the WzzB/Cld/Rol family.</text>
</comment>
<reference key="1">
    <citation type="submission" date="1997-10" db="EMBL/GenBank/DDBJ databases">
        <authorList>
            <person name="Mouslim C."/>
            <person name="Cano D.A."/>
            <person name="Casadesus J."/>
        </authorList>
    </citation>
    <scope>NUCLEOTIDE SEQUENCE [GENOMIC DNA]</scope>
    <source>
        <strain>LT2</strain>
    </source>
</reference>
<reference key="2">
    <citation type="journal article" date="2001" name="Nature">
        <title>Complete genome sequence of Salmonella enterica serovar Typhimurium LT2.</title>
        <authorList>
            <person name="McClelland M."/>
            <person name="Sanderson K.E."/>
            <person name="Spieth J."/>
            <person name="Clifton S.W."/>
            <person name="Latreille P."/>
            <person name="Courtney L."/>
            <person name="Porwollik S."/>
            <person name="Ali J."/>
            <person name="Dante M."/>
            <person name="Du F."/>
            <person name="Hou S."/>
            <person name="Layman D."/>
            <person name="Leonard S."/>
            <person name="Nguyen C."/>
            <person name="Scott K."/>
            <person name="Holmes A."/>
            <person name="Grewal N."/>
            <person name="Mulvaney E."/>
            <person name="Ryan E."/>
            <person name="Sun H."/>
            <person name="Florea L."/>
            <person name="Miller W."/>
            <person name="Stoneking T."/>
            <person name="Nhan M."/>
            <person name="Waterston R."/>
            <person name="Wilson R.K."/>
        </authorList>
    </citation>
    <scope>NUCLEOTIDE SEQUENCE [LARGE SCALE GENOMIC DNA]</scope>
    <source>
        <strain>LT2 / SGSC1412 / ATCC 700720</strain>
    </source>
</reference>
<protein>
    <recommendedName>
        <fullName evidence="1">ECA polysaccharide chain length modulation protein</fullName>
    </recommendedName>
</protein>
<evidence type="ECO:0000255" key="1">
    <source>
        <dbReference type="HAMAP-Rule" id="MF_02025"/>
    </source>
</evidence>
<evidence type="ECO:0000305" key="2"/>
<gene>
    <name evidence="1" type="primary">wzzE</name>
    <name type="synonym">metN</name>
    <name type="ordered locus">STM3919</name>
    <name type="ORF">STMD1.71</name>
</gene>
<keyword id="KW-0997">Cell inner membrane</keyword>
<keyword id="KW-1003">Cell membrane</keyword>
<keyword id="KW-0472">Membrane</keyword>
<keyword id="KW-1185">Reference proteome</keyword>
<keyword id="KW-0812">Transmembrane</keyword>
<keyword id="KW-1133">Transmembrane helix</keyword>
<feature type="chain" id="PRO_0000065999" description="ECA polysaccharide chain length modulation protein">
    <location>
        <begin position="1"/>
        <end position="348"/>
    </location>
</feature>
<feature type="transmembrane region" description="Helical" evidence="1">
    <location>
        <begin position="31"/>
        <end position="51"/>
    </location>
</feature>
<feature type="transmembrane region" description="Helical" evidence="1">
    <location>
        <begin position="323"/>
        <end position="343"/>
    </location>
</feature>
<feature type="sequence conflict" description="In Ref. 1; CAA05288." evidence="2" ref="1">
    <original>ARAVS</original>
    <variation>KHARD</variation>
    <location>
        <begin position="8"/>
        <end position="12"/>
    </location>
</feature>
<feature type="sequence conflict" description="In Ref. 1; CAA05288." evidence="2" ref="1">
    <original>IGIGLLFALIALAYTFFARQEWSATAITDR</original>
    <variation>DRHWPAICPYRVSLYLFCSSGVECDGDHRS</variation>
    <location>
        <begin position="34"/>
        <end position="63"/>
    </location>
</feature>
<feature type="sequence conflict" description="In Ref. 1; CAA05288." evidence="2" ref="1">
    <location>
        <position position="170"/>
    </location>
</feature>
<feature type="sequence conflict" description="In Ref. 1; CAA05288." evidence="2" ref="1">
    <original>A</original>
    <variation>R</variation>
    <location>
        <position position="180"/>
    </location>
</feature>
<feature type="sequence conflict" description="In Ref. 1; CAA05288." evidence="2" ref="1">
    <original>QTYRYLRTPEEP</original>
    <variation>SDLSLFAYAGRT</variation>
    <location>
        <begin position="303"/>
        <end position="314"/>
    </location>
</feature>
<proteinExistence type="inferred from homology"/>
<accession>O33789</accession>
<accession>Q9L6R6</accession>
<organism>
    <name type="scientific">Salmonella typhimurium (strain LT2 / SGSC1412 / ATCC 700720)</name>
    <dbReference type="NCBI Taxonomy" id="99287"/>
    <lineage>
        <taxon>Bacteria</taxon>
        <taxon>Pseudomonadati</taxon>
        <taxon>Pseudomonadota</taxon>
        <taxon>Gammaproteobacteria</taxon>
        <taxon>Enterobacterales</taxon>
        <taxon>Enterobacteriaceae</taxon>
        <taxon>Salmonella</taxon>
    </lineage>
</organism>